<protein>
    <recommendedName>
        <fullName evidence="1">Large ribosomal subunit protein bL27</fullName>
    </recommendedName>
    <alternativeName>
        <fullName evidence="3">50S ribosomal protein L27</fullName>
    </alternativeName>
</protein>
<name>RL27_RHOP5</name>
<evidence type="ECO:0000255" key="1">
    <source>
        <dbReference type="HAMAP-Rule" id="MF_00539"/>
    </source>
</evidence>
<evidence type="ECO:0000256" key="2">
    <source>
        <dbReference type="SAM" id="MobiDB-lite"/>
    </source>
</evidence>
<evidence type="ECO:0000305" key="3"/>
<reference key="1">
    <citation type="submission" date="2006-09" db="EMBL/GenBank/DDBJ databases">
        <title>Complete sequence of Rhodopseudomonas palustris BisA53.</title>
        <authorList>
            <consortium name="US DOE Joint Genome Institute"/>
            <person name="Copeland A."/>
            <person name="Lucas S."/>
            <person name="Lapidus A."/>
            <person name="Barry K."/>
            <person name="Detter J.C."/>
            <person name="Glavina del Rio T."/>
            <person name="Hammon N."/>
            <person name="Israni S."/>
            <person name="Dalin E."/>
            <person name="Tice H."/>
            <person name="Pitluck S."/>
            <person name="Chain P."/>
            <person name="Malfatti S."/>
            <person name="Shin M."/>
            <person name="Vergez L."/>
            <person name="Schmutz J."/>
            <person name="Larimer F."/>
            <person name="Land M."/>
            <person name="Hauser L."/>
            <person name="Pelletier D.A."/>
            <person name="Kyrpides N."/>
            <person name="Kim E."/>
            <person name="Harwood C.S."/>
            <person name="Oda Y."/>
            <person name="Richardson P."/>
        </authorList>
    </citation>
    <scope>NUCLEOTIDE SEQUENCE [LARGE SCALE GENOMIC DNA]</scope>
    <source>
        <strain>BisA53</strain>
    </source>
</reference>
<organism>
    <name type="scientific">Rhodopseudomonas palustris (strain BisA53)</name>
    <dbReference type="NCBI Taxonomy" id="316055"/>
    <lineage>
        <taxon>Bacteria</taxon>
        <taxon>Pseudomonadati</taxon>
        <taxon>Pseudomonadota</taxon>
        <taxon>Alphaproteobacteria</taxon>
        <taxon>Hyphomicrobiales</taxon>
        <taxon>Nitrobacteraceae</taxon>
        <taxon>Rhodopseudomonas</taxon>
    </lineage>
</organism>
<keyword id="KW-0687">Ribonucleoprotein</keyword>
<keyword id="KW-0689">Ribosomal protein</keyword>
<gene>
    <name evidence="1" type="primary">rpmA</name>
    <name type="ordered locus">RPE_0555</name>
</gene>
<proteinExistence type="inferred from homology"/>
<sequence>MAHKKAGGSSRNGRDSAGKRLGIKTYGGEHVIPGNIIARQRGTTWHPGLNVGMGTDHTLFAKIEGHVQFRAKGNGRTFVSVLPIVAAAE</sequence>
<feature type="chain" id="PRO_1000017577" description="Large ribosomal subunit protein bL27">
    <location>
        <begin position="1"/>
        <end position="89"/>
    </location>
</feature>
<feature type="region of interest" description="Disordered" evidence="2">
    <location>
        <begin position="1"/>
        <end position="23"/>
    </location>
</feature>
<dbReference type="EMBL" id="CP000463">
    <property type="protein sequence ID" value="ABJ04514.1"/>
    <property type="molecule type" value="Genomic_DNA"/>
</dbReference>
<dbReference type="SMR" id="Q07U70"/>
<dbReference type="STRING" id="316055.RPE_0555"/>
<dbReference type="KEGG" id="rpe:RPE_0555"/>
<dbReference type="eggNOG" id="COG0211">
    <property type="taxonomic scope" value="Bacteria"/>
</dbReference>
<dbReference type="HOGENOM" id="CLU_095424_4_1_5"/>
<dbReference type="OrthoDB" id="9803474at2"/>
<dbReference type="GO" id="GO:0022625">
    <property type="term" value="C:cytosolic large ribosomal subunit"/>
    <property type="evidence" value="ECO:0007669"/>
    <property type="project" value="TreeGrafter"/>
</dbReference>
<dbReference type="GO" id="GO:0003735">
    <property type="term" value="F:structural constituent of ribosome"/>
    <property type="evidence" value="ECO:0007669"/>
    <property type="project" value="InterPro"/>
</dbReference>
<dbReference type="GO" id="GO:0006412">
    <property type="term" value="P:translation"/>
    <property type="evidence" value="ECO:0007669"/>
    <property type="project" value="UniProtKB-UniRule"/>
</dbReference>
<dbReference type="FunFam" id="2.40.50.100:FF:000020">
    <property type="entry name" value="50S ribosomal protein L27"/>
    <property type="match status" value="1"/>
</dbReference>
<dbReference type="Gene3D" id="2.40.50.100">
    <property type="match status" value="1"/>
</dbReference>
<dbReference type="HAMAP" id="MF_00539">
    <property type="entry name" value="Ribosomal_bL27"/>
    <property type="match status" value="1"/>
</dbReference>
<dbReference type="InterPro" id="IPR001684">
    <property type="entry name" value="Ribosomal_bL27"/>
</dbReference>
<dbReference type="InterPro" id="IPR018261">
    <property type="entry name" value="Ribosomal_bL27_CS"/>
</dbReference>
<dbReference type="NCBIfam" id="TIGR00062">
    <property type="entry name" value="L27"/>
    <property type="match status" value="1"/>
</dbReference>
<dbReference type="PANTHER" id="PTHR15893:SF0">
    <property type="entry name" value="LARGE RIBOSOMAL SUBUNIT PROTEIN BL27M"/>
    <property type="match status" value="1"/>
</dbReference>
<dbReference type="PANTHER" id="PTHR15893">
    <property type="entry name" value="RIBOSOMAL PROTEIN L27"/>
    <property type="match status" value="1"/>
</dbReference>
<dbReference type="Pfam" id="PF01016">
    <property type="entry name" value="Ribosomal_L27"/>
    <property type="match status" value="1"/>
</dbReference>
<dbReference type="PRINTS" id="PR00063">
    <property type="entry name" value="RIBOSOMALL27"/>
</dbReference>
<dbReference type="SUPFAM" id="SSF110324">
    <property type="entry name" value="Ribosomal L27 protein-like"/>
    <property type="match status" value="1"/>
</dbReference>
<dbReference type="PROSITE" id="PS00831">
    <property type="entry name" value="RIBOSOMAL_L27"/>
    <property type="match status" value="1"/>
</dbReference>
<accession>Q07U70</accession>
<comment type="similarity">
    <text evidence="1">Belongs to the bacterial ribosomal protein bL27 family.</text>
</comment>